<organism>
    <name type="scientific">Actinobacillus pleuropneumoniae serotype 3 (strain JL03)</name>
    <dbReference type="NCBI Taxonomy" id="434271"/>
    <lineage>
        <taxon>Bacteria</taxon>
        <taxon>Pseudomonadati</taxon>
        <taxon>Pseudomonadota</taxon>
        <taxon>Gammaproteobacteria</taxon>
        <taxon>Pasteurellales</taxon>
        <taxon>Pasteurellaceae</taxon>
        <taxon>Actinobacillus</taxon>
    </lineage>
</organism>
<accession>B0BQ64</accession>
<feature type="chain" id="PRO_1000120023" description="ATP-dependent 6-phosphofructokinase">
    <location>
        <begin position="1"/>
        <end position="324"/>
    </location>
</feature>
<feature type="active site" description="Proton acceptor" evidence="1">
    <location>
        <position position="132"/>
    </location>
</feature>
<feature type="binding site" evidence="1">
    <location>
        <position position="15"/>
    </location>
    <ligand>
        <name>ATP</name>
        <dbReference type="ChEBI" id="CHEBI:30616"/>
    </ligand>
</feature>
<feature type="binding site" evidence="1">
    <location>
        <begin position="25"/>
        <end position="29"/>
    </location>
    <ligand>
        <name>ADP</name>
        <dbReference type="ChEBI" id="CHEBI:456216"/>
        <note>allosteric activator; ligand shared between dimeric partners</note>
    </ligand>
</feature>
<feature type="binding site" evidence="1">
    <location>
        <begin position="76"/>
        <end position="77"/>
    </location>
    <ligand>
        <name>ATP</name>
        <dbReference type="ChEBI" id="CHEBI:30616"/>
    </ligand>
</feature>
<feature type="binding site" evidence="1">
    <location>
        <begin position="106"/>
        <end position="109"/>
    </location>
    <ligand>
        <name>ATP</name>
        <dbReference type="ChEBI" id="CHEBI:30616"/>
    </ligand>
</feature>
<feature type="binding site" evidence="1">
    <location>
        <position position="107"/>
    </location>
    <ligand>
        <name>Mg(2+)</name>
        <dbReference type="ChEBI" id="CHEBI:18420"/>
        <note>catalytic</note>
    </ligand>
</feature>
<feature type="binding site" description="in other chain" evidence="1">
    <location>
        <begin position="130"/>
        <end position="132"/>
    </location>
    <ligand>
        <name>substrate</name>
        <note>ligand shared between dimeric partners</note>
    </ligand>
</feature>
<feature type="binding site" description="in other chain" evidence="1">
    <location>
        <position position="159"/>
    </location>
    <ligand>
        <name>ADP</name>
        <dbReference type="ChEBI" id="CHEBI:456216"/>
        <note>allosteric activator; ligand shared between dimeric partners</note>
    </ligand>
</feature>
<feature type="binding site" evidence="1">
    <location>
        <position position="167"/>
    </location>
    <ligand>
        <name>substrate</name>
        <note>ligand shared between dimeric partners</note>
    </ligand>
</feature>
<feature type="binding site" description="in other chain" evidence="1">
    <location>
        <begin position="174"/>
        <end position="176"/>
    </location>
    <ligand>
        <name>substrate</name>
        <note>ligand shared between dimeric partners</note>
    </ligand>
</feature>
<feature type="binding site" description="in other chain" evidence="1">
    <location>
        <begin position="190"/>
        <end position="192"/>
    </location>
    <ligand>
        <name>ADP</name>
        <dbReference type="ChEBI" id="CHEBI:456216"/>
        <note>allosteric activator; ligand shared between dimeric partners</note>
    </ligand>
</feature>
<feature type="binding site" description="in other chain" evidence="1">
    <location>
        <position position="216"/>
    </location>
    <ligand>
        <name>ADP</name>
        <dbReference type="ChEBI" id="CHEBI:456216"/>
        <note>allosteric activator; ligand shared between dimeric partners</note>
    </ligand>
</feature>
<feature type="binding site" description="in other chain" evidence="1">
    <location>
        <begin position="218"/>
        <end position="220"/>
    </location>
    <ligand>
        <name>ADP</name>
        <dbReference type="ChEBI" id="CHEBI:456216"/>
        <note>allosteric activator; ligand shared between dimeric partners</note>
    </ligand>
</feature>
<feature type="binding site" description="in other chain" evidence="1">
    <location>
        <position position="227"/>
    </location>
    <ligand>
        <name>substrate</name>
        <note>ligand shared between dimeric partners</note>
    </ligand>
</feature>
<feature type="binding site" evidence="1">
    <location>
        <position position="248"/>
    </location>
    <ligand>
        <name>substrate</name>
        <note>ligand shared between dimeric partners</note>
    </ligand>
</feature>
<feature type="binding site" description="in other chain" evidence="1">
    <location>
        <begin position="254"/>
        <end position="257"/>
    </location>
    <ligand>
        <name>substrate</name>
        <note>ligand shared between dimeric partners</note>
    </ligand>
</feature>
<proteinExistence type="inferred from homology"/>
<comment type="function">
    <text evidence="1">Catalyzes the phosphorylation of D-fructose 6-phosphate to fructose 1,6-bisphosphate by ATP, the first committing step of glycolysis.</text>
</comment>
<comment type="catalytic activity">
    <reaction evidence="1">
        <text>beta-D-fructose 6-phosphate + ATP = beta-D-fructose 1,6-bisphosphate + ADP + H(+)</text>
        <dbReference type="Rhea" id="RHEA:16109"/>
        <dbReference type="ChEBI" id="CHEBI:15378"/>
        <dbReference type="ChEBI" id="CHEBI:30616"/>
        <dbReference type="ChEBI" id="CHEBI:32966"/>
        <dbReference type="ChEBI" id="CHEBI:57634"/>
        <dbReference type="ChEBI" id="CHEBI:456216"/>
        <dbReference type="EC" id="2.7.1.11"/>
    </reaction>
</comment>
<comment type="cofactor">
    <cofactor evidence="1">
        <name>Mg(2+)</name>
        <dbReference type="ChEBI" id="CHEBI:18420"/>
    </cofactor>
</comment>
<comment type="activity regulation">
    <text evidence="1">Allosterically activated by ADP and other diphosphonucleosides, and allosterically inhibited by phosphoenolpyruvate.</text>
</comment>
<comment type="pathway">
    <text evidence="1">Carbohydrate degradation; glycolysis; D-glyceraldehyde 3-phosphate and glycerone phosphate from D-glucose: step 3/4.</text>
</comment>
<comment type="subunit">
    <text evidence="1">Homotetramer.</text>
</comment>
<comment type="subcellular location">
    <subcellularLocation>
        <location evidence="1">Cytoplasm</location>
    </subcellularLocation>
</comment>
<comment type="similarity">
    <text evidence="1">Belongs to the phosphofructokinase type A (PFKA) family. ATP-dependent PFK group I subfamily. Prokaryotic clade 'B1' sub-subfamily.</text>
</comment>
<gene>
    <name evidence="1" type="primary">pfkA</name>
    <name type="ordered locus">APJL_1143</name>
</gene>
<protein>
    <recommendedName>
        <fullName evidence="1">ATP-dependent 6-phosphofructokinase</fullName>
        <shortName evidence="1">ATP-PFK</shortName>
        <shortName evidence="1">Phosphofructokinase</shortName>
        <ecNumber evidence="1">2.7.1.11</ecNumber>
    </recommendedName>
    <alternativeName>
        <fullName evidence="1">Phosphohexokinase</fullName>
    </alternativeName>
</protein>
<reference key="1">
    <citation type="journal article" date="2008" name="PLoS ONE">
        <title>Genome biology of Actinobacillus pleuropneumoniae JL03, an isolate of serotype 3 prevalent in China.</title>
        <authorList>
            <person name="Xu Z."/>
            <person name="Zhou Y."/>
            <person name="Li L."/>
            <person name="Zhou R."/>
            <person name="Xiao S."/>
            <person name="Wan Y."/>
            <person name="Zhang S."/>
            <person name="Wang K."/>
            <person name="Li W."/>
            <person name="Li L."/>
            <person name="Jin H."/>
            <person name="Kang M."/>
            <person name="Dalai B."/>
            <person name="Li T."/>
            <person name="Liu L."/>
            <person name="Cheng Y."/>
            <person name="Zhang L."/>
            <person name="Xu T."/>
            <person name="Zheng H."/>
            <person name="Pu S."/>
            <person name="Wang B."/>
            <person name="Gu W."/>
            <person name="Zhang X.L."/>
            <person name="Zhu G.-F."/>
            <person name="Wang S."/>
            <person name="Zhao G.-P."/>
            <person name="Chen H."/>
        </authorList>
    </citation>
    <scope>NUCLEOTIDE SEQUENCE [LARGE SCALE GENOMIC DNA]</scope>
    <source>
        <strain>JL03</strain>
    </source>
</reference>
<keyword id="KW-0021">Allosteric enzyme</keyword>
<keyword id="KW-0067">ATP-binding</keyword>
<keyword id="KW-0963">Cytoplasm</keyword>
<keyword id="KW-0324">Glycolysis</keyword>
<keyword id="KW-0418">Kinase</keyword>
<keyword id="KW-0460">Magnesium</keyword>
<keyword id="KW-0479">Metal-binding</keyword>
<keyword id="KW-0547">Nucleotide-binding</keyword>
<keyword id="KW-0808">Transferase</keyword>
<name>PFKA_ACTPJ</name>
<dbReference type="EC" id="2.7.1.11" evidence="1"/>
<dbReference type="EMBL" id="CP000687">
    <property type="protein sequence ID" value="ABY69699.1"/>
    <property type="molecule type" value="Genomic_DNA"/>
</dbReference>
<dbReference type="RefSeq" id="WP_005598005.1">
    <property type="nucleotide sequence ID" value="NC_010278.1"/>
</dbReference>
<dbReference type="SMR" id="B0BQ64"/>
<dbReference type="GeneID" id="48599356"/>
<dbReference type="KEGG" id="apj:APJL_1143"/>
<dbReference type="HOGENOM" id="CLU_020655_0_1_6"/>
<dbReference type="UniPathway" id="UPA00109">
    <property type="reaction ID" value="UER00182"/>
</dbReference>
<dbReference type="Proteomes" id="UP000008547">
    <property type="component" value="Chromosome"/>
</dbReference>
<dbReference type="GO" id="GO:0005945">
    <property type="term" value="C:6-phosphofructokinase complex"/>
    <property type="evidence" value="ECO:0007669"/>
    <property type="project" value="TreeGrafter"/>
</dbReference>
<dbReference type="GO" id="GO:0003872">
    <property type="term" value="F:6-phosphofructokinase activity"/>
    <property type="evidence" value="ECO:0007669"/>
    <property type="project" value="UniProtKB-UniRule"/>
</dbReference>
<dbReference type="GO" id="GO:0016208">
    <property type="term" value="F:AMP binding"/>
    <property type="evidence" value="ECO:0007669"/>
    <property type="project" value="TreeGrafter"/>
</dbReference>
<dbReference type="GO" id="GO:0005524">
    <property type="term" value="F:ATP binding"/>
    <property type="evidence" value="ECO:0007669"/>
    <property type="project" value="UniProtKB-KW"/>
</dbReference>
<dbReference type="GO" id="GO:0070095">
    <property type="term" value="F:fructose-6-phosphate binding"/>
    <property type="evidence" value="ECO:0007669"/>
    <property type="project" value="TreeGrafter"/>
</dbReference>
<dbReference type="GO" id="GO:0042802">
    <property type="term" value="F:identical protein binding"/>
    <property type="evidence" value="ECO:0007669"/>
    <property type="project" value="TreeGrafter"/>
</dbReference>
<dbReference type="GO" id="GO:0046872">
    <property type="term" value="F:metal ion binding"/>
    <property type="evidence" value="ECO:0007669"/>
    <property type="project" value="UniProtKB-KW"/>
</dbReference>
<dbReference type="GO" id="GO:0048029">
    <property type="term" value="F:monosaccharide binding"/>
    <property type="evidence" value="ECO:0007669"/>
    <property type="project" value="TreeGrafter"/>
</dbReference>
<dbReference type="GO" id="GO:0061621">
    <property type="term" value="P:canonical glycolysis"/>
    <property type="evidence" value="ECO:0007669"/>
    <property type="project" value="TreeGrafter"/>
</dbReference>
<dbReference type="GO" id="GO:0030388">
    <property type="term" value="P:fructose 1,6-bisphosphate metabolic process"/>
    <property type="evidence" value="ECO:0007669"/>
    <property type="project" value="TreeGrafter"/>
</dbReference>
<dbReference type="GO" id="GO:0006002">
    <property type="term" value="P:fructose 6-phosphate metabolic process"/>
    <property type="evidence" value="ECO:0007669"/>
    <property type="project" value="InterPro"/>
</dbReference>
<dbReference type="CDD" id="cd00763">
    <property type="entry name" value="Bacterial_PFK"/>
    <property type="match status" value="1"/>
</dbReference>
<dbReference type="FunFam" id="3.40.50.450:FF:000001">
    <property type="entry name" value="ATP-dependent 6-phosphofructokinase"/>
    <property type="match status" value="1"/>
</dbReference>
<dbReference type="FunFam" id="3.40.50.460:FF:000002">
    <property type="entry name" value="ATP-dependent 6-phosphofructokinase"/>
    <property type="match status" value="1"/>
</dbReference>
<dbReference type="Gene3D" id="3.40.50.450">
    <property type="match status" value="1"/>
</dbReference>
<dbReference type="Gene3D" id="3.40.50.460">
    <property type="entry name" value="Phosphofructokinase domain"/>
    <property type="match status" value="1"/>
</dbReference>
<dbReference type="HAMAP" id="MF_00339">
    <property type="entry name" value="Phosphofructokinase_I_B1"/>
    <property type="match status" value="1"/>
</dbReference>
<dbReference type="InterPro" id="IPR022953">
    <property type="entry name" value="ATP_PFK"/>
</dbReference>
<dbReference type="InterPro" id="IPR012003">
    <property type="entry name" value="ATP_PFK_prok-type"/>
</dbReference>
<dbReference type="InterPro" id="IPR012828">
    <property type="entry name" value="PFKA_ATP_prok"/>
</dbReference>
<dbReference type="InterPro" id="IPR015912">
    <property type="entry name" value="Phosphofructokinase_CS"/>
</dbReference>
<dbReference type="InterPro" id="IPR000023">
    <property type="entry name" value="Phosphofructokinase_dom"/>
</dbReference>
<dbReference type="InterPro" id="IPR035966">
    <property type="entry name" value="PKF_sf"/>
</dbReference>
<dbReference type="NCBIfam" id="TIGR02482">
    <property type="entry name" value="PFKA_ATP"/>
    <property type="match status" value="1"/>
</dbReference>
<dbReference type="NCBIfam" id="NF002872">
    <property type="entry name" value="PRK03202.1"/>
    <property type="match status" value="1"/>
</dbReference>
<dbReference type="PANTHER" id="PTHR13697:SF4">
    <property type="entry name" value="ATP-DEPENDENT 6-PHOSPHOFRUCTOKINASE"/>
    <property type="match status" value="1"/>
</dbReference>
<dbReference type="PANTHER" id="PTHR13697">
    <property type="entry name" value="PHOSPHOFRUCTOKINASE"/>
    <property type="match status" value="1"/>
</dbReference>
<dbReference type="Pfam" id="PF00365">
    <property type="entry name" value="PFK"/>
    <property type="match status" value="1"/>
</dbReference>
<dbReference type="PIRSF" id="PIRSF000532">
    <property type="entry name" value="ATP_PFK_prok"/>
    <property type="match status" value="1"/>
</dbReference>
<dbReference type="PRINTS" id="PR00476">
    <property type="entry name" value="PHFRCTKINASE"/>
</dbReference>
<dbReference type="SUPFAM" id="SSF53784">
    <property type="entry name" value="Phosphofructokinase"/>
    <property type="match status" value="1"/>
</dbReference>
<dbReference type="PROSITE" id="PS00433">
    <property type="entry name" value="PHOSPHOFRUCTOKINASE"/>
    <property type="match status" value="1"/>
</dbReference>
<evidence type="ECO:0000255" key="1">
    <source>
        <dbReference type="HAMAP-Rule" id="MF_00339"/>
    </source>
</evidence>
<sequence length="324" mass="35515">MAKQIKKIAVLTSGGDAPGMNAAIRGVVRAALNEGLEVYGVQDGYYGLYTDRVIPLDRRSVSETINRGGTFLGSARFPQFKDPDVRKKSVETLKKYDIDALVVIGGDGSYMGAKLITEEFGYPCIGIPGTIDNDIVGTDYTIGYQTALETAVEAIDRLRDTSTSHQRISIVEIMGRHCGDLTISAALASGCEYIIVPEKGLDKESLMRNIEDGFNKGKRHAIIAITELMTDVQALAKEIEDRFGHETRATVLGHIQRGGAPCPFDRILASRMGVYAVDLLLQGHGGRCIGIKNENLVHHDIIDAINNMRRPFKEELFEAARKLF</sequence>